<proteinExistence type="evidence at transcript level"/>
<reference evidence="6" key="1">
    <citation type="journal article" date="1999" name="Differentiation">
        <title>Dynamic and tissue-specific expression of eIF4E during zebrafish embryogenesis.</title>
        <authorList>
            <person name="Fahrenkrug S.C."/>
            <person name="Dahlquist M.O."/>
            <person name="Clark K.J."/>
            <person name="Hackett P.B."/>
        </authorList>
    </citation>
    <scope>NUCLEOTIDE SEQUENCE [MRNA]</scope>
    <scope>NUCLEOTIDE SEQUENCE [GENOMIC DNA] OF 1-70</scope>
    <scope>DEVELOPMENTAL STAGE</scope>
    <source>
        <tissue evidence="2">Oocyte</tissue>
    </source>
</reference>
<reference evidence="7" key="2">
    <citation type="submission" date="2003-08" db="EMBL/GenBank/DDBJ databases">
        <authorList>
            <consortium name="NIH - Zebrafish Gene Collection (ZGC) project"/>
        </authorList>
    </citation>
    <scope>NUCLEOTIDE SEQUENCE [LARGE SCALE MRNA]</scope>
</reference>
<reference evidence="5" key="3">
    <citation type="journal article" date="2004" name="J. Biol. Chem.">
        <title>Two zebrafish eIF4E family members are differentially expressed and functionally divergent.</title>
        <authorList>
            <person name="Robalino J."/>
            <person name="Joshi B."/>
            <person name="Fahrenkrug S.C."/>
            <person name="Jagus R."/>
        </authorList>
    </citation>
    <scope>FUNCTION</scope>
    <scope>SUBCELLULAR LOCATION</scope>
    <scope>TISSUE SPECIFICITY</scope>
    <scope>DEVELOPMENTAL STAGE</scope>
</reference>
<organism>
    <name type="scientific">Danio rerio</name>
    <name type="common">Zebrafish</name>
    <name type="synonym">Brachydanio rerio</name>
    <dbReference type="NCBI Taxonomy" id="7955"/>
    <lineage>
        <taxon>Eukaryota</taxon>
        <taxon>Metazoa</taxon>
        <taxon>Chordata</taxon>
        <taxon>Craniata</taxon>
        <taxon>Vertebrata</taxon>
        <taxon>Euteleostomi</taxon>
        <taxon>Actinopterygii</taxon>
        <taxon>Neopterygii</taxon>
        <taxon>Teleostei</taxon>
        <taxon>Ostariophysi</taxon>
        <taxon>Cypriniformes</taxon>
        <taxon>Danionidae</taxon>
        <taxon>Danioninae</taxon>
        <taxon>Danio</taxon>
    </lineage>
</organism>
<comment type="function">
    <text evidence="4">Does not appear to be a mRNA-cap-binding protein.</text>
</comment>
<comment type="subcellular location">
    <subcellularLocation>
        <location evidence="3">Cytoplasm</location>
    </subcellularLocation>
    <subcellularLocation>
        <location evidence="3">Nucleus</location>
    </subcellularLocation>
</comment>
<comment type="tissue specificity">
    <text evidence="3">Ovary, muscle and testis.</text>
</comment>
<comment type="developmental stage">
    <text evidence="2 3">Expressed both maternally and zygotically. Levels decrease on oocyte maturation, increase during the mid-blastula transition, then decline again and are lost by 24 hours post-fertilization (hpf). Uniform distribution during gastrulation, but later becomes concentrated in mesodermal lineages, particularly those located ventrally.</text>
</comment>
<name>IF4EB_DANRE</name>
<keyword id="KW-0963">Cytoplasm</keyword>
<keyword id="KW-0539">Nucleus</keyword>
<keyword id="KW-1185">Reference proteome</keyword>
<gene>
    <name evidence="8" type="primary">eif4e1b</name>
</gene>
<accession>Q9PW28</accession>
<accession>Q9PW27</accession>
<protein>
    <recommendedName>
        <fullName>Eukaryotic translation initiation factor 4E-1B</fullName>
        <shortName>eIF4E</shortName>
        <shortName>eIF4E-1B</shortName>
    </recommendedName>
</protein>
<evidence type="ECO:0000250" key="1">
    <source>
        <dbReference type="UniProtKB" id="P06730"/>
    </source>
</evidence>
<evidence type="ECO:0000269" key="2">
    <source>
    </source>
</evidence>
<evidence type="ECO:0000269" key="3">
    <source>
    </source>
</evidence>
<evidence type="ECO:0000303" key="4">
    <source>
    </source>
</evidence>
<evidence type="ECO:0000305" key="5"/>
<evidence type="ECO:0000312" key="6">
    <source>
        <dbReference type="EMBL" id="AAD50526.1"/>
    </source>
</evidence>
<evidence type="ECO:0000312" key="7">
    <source>
        <dbReference type="EMBL" id="AAH55649.1"/>
    </source>
</evidence>
<evidence type="ECO:0000312" key="8">
    <source>
        <dbReference type="ZFIN" id="ZDB-GENE-980526-127"/>
    </source>
</evidence>
<dbReference type="EMBL" id="AF176317">
    <property type="protein sequence ID" value="AAD50526.1"/>
    <property type="molecule type" value="mRNA"/>
</dbReference>
<dbReference type="EMBL" id="AF176318">
    <property type="protein sequence ID" value="AAD51083.1"/>
    <property type="molecule type" value="Genomic_DNA"/>
</dbReference>
<dbReference type="EMBL" id="BC055649">
    <property type="protein sequence ID" value="AAH55649.1"/>
    <property type="molecule type" value="mRNA"/>
</dbReference>
<dbReference type="RefSeq" id="NP_571529.1">
    <property type="nucleotide sequence ID" value="NM_131454.1"/>
</dbReference>
<dbReference type="SMR" id="Q9PW28"/>
<dbReference type="FunCoup" id="Q9PW28">
    <property type="interactions" value="1466"/>
</dbReference>
<dbReference type="STRING" id="7955.ENSDARP00000022906"/>
<dbReference type="PaxDb" id="7955-ENSDARP00000022906"/>
<dbReference type="Ensembl" id="ENSDART00000017881">
    <property type="protein sequence ID" value="ENSDARP00000022906"/>
    <property type="gene ID" value="ENSDARG00000014565"/>
</dbReference>
<dbReference type="GeneID" id="30738"/>
<dbReference type="KEGG" id="dre:30738"/>
<dbReference type="AGR" id="ZFIN:ZDB-GENE-980526-127"/>
<dbReference type="CTD" id="253314"/>
<dbReference type="ZFIN" id="ZDB-GENE-980526-127">
    <property type="gene designation" value="eif4e1b"/>
</dbReference>
<dbReference type="eggNOG" id="KOG1670">
    <property type="taxonomic scope" value="Eukaryota"/>
</dbReference>
<dbReference type="HOGENOM" id="CLU_043552_1_0_1"/>
<dbReference type="InParanoid" id="Q9PW28"/>
<dbReference type="OMA" id="QTEFKMM"/>
<dbReference type="OrthoDB" id="590761at2759"/>
<dbReference type="PhylomeDB" id="Q9PW28"/>
<dbReference type="TreeFam" id="TF101526"/>
<dbReference type="PRO" id="PR:Q9PW28"/>
<dbReference type="Proteomes" id="UP000000437">
    <property type="component" value="Chromosome 5"/>
</dbReference>
<dbReference type="Bgee" id="ENSDARG00000014565">
    <property type="expression patterns" value="Expressed in testis and 30 other cell types or tissues"/>
</dbReference>
<dbReference type="ExpressionAtlas" id="Q9PW28">
    <property type="expression patterns" value="baseline"/>
</dbReference>
<dbReference type="GO" id="GO:0005737">
    <property type="term" value="C:cytoplasm"/>
    <property type="evidence" value="ECO:0000250"/>
    <property type="project" value="UniProtKB"/>
</dbReference>
<dbReference type="GO" id="GO:0016281">
    <property type="term" value="C:eukaryotic translation initiation factor 4F complex"/>
    <property type="evidence" value="ECO:0000250"/>
    <property type="project" value="UniProtKB"/>
</dbReference>
<dbReference type="GO" id="GO:0016607">
    <property type="term" value="C:nuclear speck"/>
    <property type="evidence" value="ECO:0000250"/>
    <property type="project" value="UniProtKB"/>
</dbReference>
<dbReference type="GO" id="GO:0005634">
    <property type="term" value="C:nucleus"/>
    <property type="evidence" value="ECO:0000250"/>
    <property type="project" value="UniProtKB"/>
</dbReference>
<dbReference type="GO" id="GO:0003723">
    <property type="term" value="F:RNA binding"/>
    <property type="evidence" value="ECO:0007669"/>
    <property type="project" value="InterPro"/>
</dbReference>
<dbReference type="GO" id="GO:0003743">
    <property type="term" value="F:translation initiation factor activity"/>
    <property type="evidence" value="ECO:0000250"/>
    <property type="project" value="UniProtKB"/>
</dbReference>
<dbReference type="GO" id="GO:0006417">
    <property type="term" value="P:regulation of translation"/>
    <property type="evidence" value="ECO:0000250"/>
    <property type="project" value="UniProtKB"/>
</dbReference>
<dbReference type="GO" id="GO:0006413">
    <property type="term" value="P:translational initiation"/>
    <property type="evidence" value="ECO:0000318"/>
    <property type="project" value="GO_Central"/>
</dbReference>
<dbReference type="FunFam" id="3.30.760.10:FF:000002">
    <property type="entry name" value="Eukaryotic translation initiation factor 4E"/>
    <property type="match status" value="1"/>
</dbReference>
<dbReference type="Gene3D" id="3.30.760.10">
    <property type="entry name" value="RNA Cap, Translation Initiation Factor Eif4e"/>
    <property type="match status" value="1"/>
</dbReference>
<dbReference type="InterPro" id="IPR023398">
    <property type="entry name" value="TIF_eIF4e-like"/>
</dbReference>
<dbReference type="InterPro" id="IPR001040">
    <property type="entry name" value="TIF_eIF_4E"/>
</dbReference>
<dbReference type="InterPro" id="IPR019770">
    <property type="entry name" value="TIF_eIF_4E_CS"/>
</dbReference>
<dbReference type="PANTHER" id="PTHR11960">
    <property type="entry name" value="EUKARYOTIC TRANSLATION INITIATION FACTOR 4E RELATED"/>
    <property type="match status" value="1"/>
</dbReference>
<dbReference type="PANTHER" id="PTHR11960:SF75">
    <property type="entry name" value="EUKARYOTIC TRANSLATION INITIATION FACTOR 4E-1B"/>
    <property type="match status" value="1"/>
</dbReference>
<dbReference type="Pfam" id="PF01652">
    <property type="entry name" value="IF4E"/>
    <property type="match status" value="1"/>
</dbReference>
<dbReference type="SUPFAM" id="SSF55418">
    <property type="entry name" value="eIF4e-like"/>
    <property type="match status" value="1"/>
</dbReference>
<dbReference type="PROSITE" id="PS00813">
    <property type="entry name" value="IF4E"/>
    <property type="match status" value="1"/>
</dbReference>
<feature type="chain" id="PRO_0000193639" description="Eukaryotic translation initiation factor 4E-1B">
    <location>
        <begin position="1"/>
        <end position="214"/>
    </location>
</feature>
<feature type="binding site" evidence="1">
    <location>
        <begin position="53"/>
        <end position="54"/>
    </location>
    <ligand>
        <name>mRNA</name>
        <dbReference type="ChEBI" id="CHEBI:33699"/>
    </ligand>
    <ligandPart>
        <name>N(7)-methylguanosine 5'-triphosphate group</name>
        <dbReference type="ChEBI" id="CHEBI:74429"/>
        <note>m7GTP residue in mRNA cap</note>
    </ligandPart>
</feature>
<feature type="binding site" evidence="1">
    <location>
        <begin position="99"/>
        <end position="100"/>
    </location>
    <ligand>
        <name>mRNA</name>
        <dbReference type="ChEBI" id="CHEBI:33699"/>
    </ligand>
    <ligandPart>
        <name>N(7)-methylguanosine 5'-triphosphate group</name>
        <dbReference type="ChEBI" id="CHEBI:74429"/>
        <note>m7GTP residue in mRNA cap</note>
    </ligandPart>
</feature>
<feature type="binding site" evidence="1">
    <location>
        <begin position="154"/>
        <end position="159"/>
    </location>
    <ligand>
        <name>mRNA</name>
        <dbReference type="ChEBI" id="CHEBI:33699"/>
    </ligand>
    <ligandPart>
        <name>N(7)-methylguanosine 5'-triphosphate group</name>
        <dbReference type="ChEBI" id="CHEBI:74429"/>
        <note>m7GTP residue in mRNA cap</note>
    </ligandPart>
</feature>
<feature type="binding site" evidence="1">
    <location>
        <begin position="202"/>
        <end position="204"/>
    </location>
    <ligand>
        <name>mRNA</name>
        <dbReference type="ChEBI" id="CHEBI:33699"/>
    </ligand>
    <ligandPart>
        <name>N(7)-methylguanosine 5'-triphosphate group</name>
        <dbReference type="ChEBI" id="CHEBI:74429"/>
        <note>m7GTP residue in mRNA cap</note>
    </ligandPart>
</feature>
<sequence length="214" mass="24745">MASCAVQLIDKVPKKKVEKKKFEPNILKEPCMKHPLQNRWGLWFYKNDKSKMWQDNLRLITKFDTVEDFWGLYNNIQLPSKLSSGCDYSMFKDGIEPMWEDRSNKCGGRWLITLAKQHRHTELDHFWLETLLCLIGEGFSSFSRDICGSVINIRAKGDKIALWTSNAENCETVTYIGRKYKESLGLPQKLVIGYQAHADTATKSNSITKNKFVV</sequence>